<name>MNMA_CHLCH</name>
<feature type="chain" id="PRO_0000349576" description="tRNA-specific 2-thiouridylase MnmA">
    <location>
        <begin position="1"/>
        <end position="359"/>
    </location>
</feature>
<feature type="region of interest" description="Interaction with tRNA" evidence="1">
    <location>
        <begin position="147"/>
        <end position="149"/>
    </location>
</feature>
<feature type="region of interest" description="Interaction with tRNA" evidence="1">
    <location>
        <begin position="306"/>
        <end position="307"/>
    </location>
</feature>
<feature type="active site" description="Nucleophile" evidence="1">
    <location>
        <position position="101"/>
    </location>
</feature>
<feature type="active site" description="Cysteine persulfide intermediate" evidence="1">
    <location>
        <position position="197"/>
    </location>
</feature>
<feature type="binding site" evidence="1">
    <location>
        <begin position="10"/>
        <end position="17"/>
    </location>
    <ligand>
        <name>ATP</name>
        <dbReference type="ChEBI" id="CHEBI:30616"/>
    </ligand>
</feature>
<feature type="binding site" evidence="1">
    <location>
        <position position="36"/>
    </location>
    <ligand>
        <name>ATP</name>
        <dbReference type="ChEBI" id="CHEBI:30616"/>
    </ligand>
</feature>
<feature type="binding site" evidence="1">
    <location>
        <position position="125"/>
    </location>
    <ligand>
        <name>ATP</name>
        <dbReference type="ChEBI" id="CHEBI:30616"/>
    </ligand>
</feature>
<feature type="site" description="Interaction with tRNA" evidence="1">
    <location>
        <position position="126"/>
    </location>
</feature>
<feature type="site" description="Interaction with tRNA" evidence="1">
    <location>
        <position position="339"/>
    </location>
</feature>
<feature type="disulfide bond" description="Alternate" evidence="1">
    <location>
        <begin position="101"/>
        <end position="197"/>
    </location>
</feature>
<keyword id="KW-0067">ATP-binding</keyword>
<keyword id="KW-0963">Cytoplasm</keyword>
<keyword id="KW-1015">Disulfide bond</keyword>
<keyword id="KW-0547">Nucleotide-binding</keyword>
<keyword id="KW-0694">RNA-binding</keyword>
<keyword id="KW-0808">Transferase</keyword>
<keyword id="KW-0819">tRNA processing</keyword>
<keyword id="KW-0820">tRNA-binding</keyword>
<dbReference type="EC" id="2.8.1.13" evidence="1"/>
<dbReference type="EMBL" id="CP000108">
    <property type="protein sequence ID" value="ABB27530.1"/>
    <property type="molecule type" value="Genomic_DNA"/>
</dbReference>
<dbReference type="SMR" id="Q3ATZ5"/>
<dbReference type="STRING" id="340177.Cag_0254"/>
<dbReference type="KEGG" id="cch:Cag_0254"/>
<dbReference type="eggNOG" id="COG0482">
    <property type="taxonomic scope" value="Bacteria"/>
</dbReference>
<dbReference type="HOGENOM" id="CLU_035188_0_0_10"/>
<dbReference type="OrthoDB" id="9800696at2"/>
<dbReference type="GO" id="GO:0005737">
    <property type="term" value="C:cytoplasm"/>
    <property type="evidence" value="ECO:0007669"/>
    <property type="project" value="UniProtKB-SubCell"/>
</dbReference>
<dbReference type="GO" id="GO:0005524">
    <property type="term" value="F:ATP binding"/>
    <property type="evidence" value="ECO:0007669"/>
    <property type="project" value="UniProtKB-KW"/>
</dbReference>
<dbReference type="GO" id="GO:0000049">
    <property type="term" value="F:tRNA binding"/>
    <property type="evidence" value="ECO:0007669"/>
    <property type="project" value="UniProtKB-KW"/>
</dbReference>
<dbReference type="GO" id="GO:0103016">
    <property type="term" value="F:tRNA-uridine 2-sulfurtransferase activity"/>
    <property type="evidence" value="ECO:0007669"/>
    <property type="project" value="UniProtKB-EC"/>
</dbReference>
<dbReference type="GO" id="GO:0002143">
    <property type="term" value="P:tRNA wobble position uridine thiolation"/>
    <property type="evidence" value="ECO:0007669"/>
    <property type="project" value="TreeGrafter"/>
</dbReference>
<dbReference type="CDD" id="cd01998">
    <property type="entry name" value="MnmA_TRMU-like"/>
    <property type="match status" value="1"/>
</dbReference>
<dbReference type="FunFam" id="2.30.30.280:FF:000001">
    <property type="entry name" value="tRNA-specific 2-thiouridylase MnmA"/>
    <property type="match status" value="1"/>
</dbReference>
<dbReference type="FunFam" id="2.40.30.10:FF:000023">
    <property type="entry name" value="tRNA-specific 2-thiouridylase MnmA"/>
    <property type="match status" value="1"/>
</dbReference>
<dbReference type="Gene3D" id="2.30.30.280">
    <property type="entry name" value="Adenine nucleotide alpha hydrolases-like domains"/>
    <property type="match status" value="1"/>
</dbReference>
<dbReference type="Gene3D" id="3.40.50.620">
    <property type="entry name" value="HUPs"/>
    <property type="match status" value="1"/>
</dbReference>
<dbReference type="Gene3D" id="2.40.30.10">
    <property type="entry name" value="Translation factors"/>
    <property type="match status" value="1"/>
</dbReference>
<dbReference type="HAMAP" id="MF_00144">
    <property type="entry name" value="tRNA_thiouridyl_MnmA"/>
    <property type="match status" value="1"/>
</dbReference>
<dbReference type="InterPro" id="IPR004506">
    <property type="entry name" value="MnmA-like"/>
</dbReference>
<dbReference type="InterPro" id="IPR046885">
    <property type="entry name" value="MnmA-like_C"/>
</dbReference>
<dbReference type="InterPro" id="IPR046884">
    <property type="entry name" value="MnmA-like_central"/>
</dbReference>
<dbReference type="InterPro" id="IPR023382">
    <property type="entry name" value="MnmA-like_central_sf"/>
</dbReference>
<dbReference type="InterPro" id="IPR014729">
    <property type="entry name" value="Rossmann-like_a/b/a_fold"/>
</dbReference>
<dbReference type="NCBIfam" id="NF001138">
    <property type="entry name" value="PRK00143.1"/>
    <property type="match status" value="1"/>
</dbReference>
<dbReference type="NCBIfam" id="TIGR00420">
    <property type="entry name" value="trmU"/>
    <property type="match status" value="1"/>
</dbReference>
<dbReference type="PANTHER" id="PTHR11933:SF5">
    <property type="entry name" value="MITOCHONDRIAL TRNA-SPECIFIC 2-THIOURIDYLASE 1"/>
    <property type="match status" value="1"/>
</dbReference>
<dbReference type="PANTHER" id="PTHR11933">
    <property type="entry name" value="TRNA 5-METHYLAMINOMETHYL-2-THIOURIDYLATE -METHYLTRANSFERASE"/>
    <property type="match status" value="1"/>
</dbReference>
<dbReference type="Pfam" id="PF03054">
    <property type="entry name" value="tRNA_Me_trans"/>
    <property type="match status" value="1"/>
</dbReference>
<dbReference type="Pfam" id="PF20258">
    <property type="entry name" value="tRNA_Me_trans_C"/>
    <property type="match status" value="1"/>
</dbReference>
<dbReference type="Pfam" id="PF20259">
    <property type="entry name" value="tRNA_Me_trans_M"/>
    <property type="match status" value="1"/>
</dbReference>
<dbReference type="SUPFAM" id="SSF52402">
    <property type="entry name" value="Adenine nucleotide alpha hydrolases-like"/>
    <property type="match status" value="1"/>
</dbReference>
<accession>Q3ATZ5</accession>
<evidence type="ECO:0000255" key="1">
    <source>
        <dbReference type="HAMAP-Rule" id="MF_00144"/>
    </source>
</evidence>
<gene>
    <name evidence="1" type="primary">mnmA</name>
    <name type="ordered locus">Cag_0254</name>
</gene>
<proteinExistence type="inferred from homology"/>
<reference key="1">
    <citation type="submission" date="2005-08" db="EMBL/GenBank/DDBJ databases">
        <title>Complete sequence of Chlorobium chlorochromatii CaD3.</title>
        <authorList>
            <consortium name="US DOE Joint Genome Institute"/>
            <person name="Copeland A."/>
            <person name="Lucas S."/>
            <person name="Lapidus A."/>
            <person name="Barry K."/>
            <person name="Detter J.C."/>
            <person name="Glavina T."/>
            <person name="Hammon N."/>
            <person name="Israni S."/>
            <person name="Pitluck S."/>
            <person name="Bryant D."/>
            <person name="Schmutz J."/>
            <person name="Larimer F."/>
            <person name="Land M."/>
            <person name="Kyrpides N."/>
            <person name="Ivanova N."/>
            <person name="Richardson P."/>
        </authorList>
    </citation>
    <scope>NUCLEOTIDE SEQUENCE [LARGE SCALE GENOMIC DNA]</scope>
    <source>
        <strain>CaD3</strain>
    </source>
</reference>
<organism>
    <name type="scientific">Chlorobium chlorochromatii (strain CaD3)</name>
    <dbReference type="NCBI Taxonomy" id="340177"/>
    <lineage>
        <taxon>Bacteria</taxon>
        <taxon>Pseudomonadati</taxon>
        <taxon>Chlorobiota</taxon>
        <taxon>Chlorobiia</taxon>
        <taxon>Chlorobiales</taxon>
        <taxon>Chlorobiaceae</taxon>
        <taxon>Chlorobium/Pelodictyon group</taxon>
        <taxon>Chlorobium</taxon>
    </lineage>
</organism>
<protein>
    <recommendedName>
        <fullName evidence="1">tRNA-specific 2-thiouridylase MnmA</fullName>
        <ecNumber evidence="1">2.8.1.13</ecNumber>
    </recommendedName>
</protein>
<sequence>MSTPHHILVGISGGVDSAVATCLLVQQGYRVTAVNLRLLDTLDAPYAEPTLQPSSLVVSDHPDYHIPLFSLNLSRTFRDEVMRYFNAEYLAGRTPNPCMVCNRQVKWAGLRHAAELIGANAIATGHYANRAFSDGRYRLYKGADSQKDQSYFLWMLSQKDLAHTLLPLGGLTKPEVRELAKNFGVRAAEKKESQEICFVPNDDYSTYLMSAMPELAERVADGDIVDAAGTVIGKHRGYPFYTIGQRRGLGVSAKEPLYVTALDAEQNRIHVGHKAALMSHRLLASRCNWIGMEPPSSSVELLGRIRYRDRQTACRVTPLENGQIEVVFQEPKSAITPGQAVVFYCGDEVLGGGFIEEGT</sequence>
<comment type="function">
    <text evidence="1">Catalyzes the 2-thiolation of uridine at the wobble position (U34) of tRNA, leading to the formation of s(2)U34.</text>
</comment>
<comment type="catalytic activity">
    <reaction evidence="1">
        <text>S-sulfanyl-L-cysteinyl-[protein] + uridine(34) in tRNA + AH2 + ATP = 2-thiouridine(34) in tRNA + L-cysteinyl-[protein] + A + AMP + diphosphate + H(+)</text>
        <dbReference type="Rhea" id="RHEA:47032"/>
        <dbReference type="Rhea" id="RHEA-COMP:10131"/>
        <dbReference type="Rhea" id="RHEA-COMP:11726"/>
        <dbReference type="Rhea" id="RHEA-COMP:11727"/>
        <dbReference type="Rhea" id="RHEA-COMP:11728"/>
        <dbReference type="ChEBI" id="CHEBI:13193"/>
        <dbReference type="ChEBI" id="CHEBI:15378"/>
        <dbReference type="ChEBI" id="CHEBI:17499"/>
        <dbReference type="ChEBI" id="CHEBI:29950"/>
        <dbReference type="ChEBI" id="CHEBI:30616"/>
        <dbReference type="ChEBI" id="CHEBI:33019"/>
        <dbReference type="ChEBI" id="CHEBI:61963"/>
        <dbReference type="ChEBI" id="CHEBI:65315"/>
        <dbReference type="ChEBI" id="CHEBI:87170"/>
        <dbReference type="ChEBI" id="CHEBI:456215"/>
        <dbReference type="EC" id="2.8.1.13"/>
    </reaction>
</comment>
<comment type="subcellular location">
    <subcellularLocation>
        <location evidence="1">Cytoplasm</location>
    </subcellularLocation>
</comment>
<comment type="similarity">
    <text evidence="1">Belongs to the MnmA/TRMU family.</text>
</comment>